<dbReference type="EMBL" id="CP000266">
    <property type="protein sequence ID" value="ABF04472.1"/>
    <property type="molecule type" value="Genomic_DNA"/>
</dbReference>
<dbReference type="RefSeq" id="WP_000426125.1">
    <property type="nucleotide sequence ID" value="NC_008258.1"/>
</dbReference>
<dbReference type="SMR" id="Q0T2J3"/>
<dbReference type="KEGG" id="sfv:SFV_2361"/>
<dbReference type="HOGENOM" id="CLU_101021_1_0_6"/>
<dbReference type="Proteomes" id="UP000000659">
    <property type="component" value="Chromosome"/>
</dbReference>
<dbReference type="FunFam" id="1.10.3190.10:FF:000001">
    <property type="entry name" value="UPF0304 protein YfbU"/>
    <property type="match status" value="1"/>
</dbReference>
<dbReference type="Gene3D" id="1.10.287.680">
    <property type="entry name" value="Helix hairpin bin"/>
    <property type="match status" value="1"/>
</dbReference>
<dbReference type="Gene3D" id="1.10.3190.10">
    <property type="entry name" value="yfbu gene product, domain 2"/>
    <property type="match status" value="1"/>
</dbReference>
<dbReference type="HAMAP" id="MF_00762">
    <property type="entry name" value="UPF0304"/>
    <property type="match status" value="1"/>
</dbReference>
<dbReference type="InterPro" id="IPR005587">
    <property type="entry name" value="UPF0304_YfbU"/>
</dbReference>
<dbReference type="InterPro" id="IPR023146">
    <property type="entry name" value="YfbU_alpha-helical_sf"/>
</dbReference>
<dbReference type="InterPro" id="IPR023145">
    <property type="entry name" value="YfbU_helix-hairpin_sf"/>
</dbReference>
<dbReference type="NCBIfam" id="NF003936">
    <property type="entry name" value="PRK05445.1"/>
    <property type="match status" value="1"/>
</dbReference>
<dbReference type="Pfam" id="PF03887">
    <property type="entry name" value="YfbU"/>
    <property type="match status" value="1"/>
</dbReference>
<dbReference type="PIRSF" id="PIRSF006272">
    <property type="entry name" value="UCP006272"/>
    <property type="match status" value="1"/>
</dbReference>
<dbReference type="SUPFAM" id="SSF116960">
    <property type="entry name" value="YfbU-like"/>
    <property type="match status" value="1"/>
</dbReference>
<reference key="1">
    <citation type="journal article" date="2006" name="BMC Genomics">
        <title>Complete genome sequence of Shigella flexneri 5b and comparison with Shigella flexneri 2a.</title>
        <authorList>
            <person name="Nie H."/>
            <person name="Yang F."/>
            <person name="Zhang X."/>
            <person name="Yang J."/>
            <person name="Chen L."/>
            <person name="Wang J."/>
            <person name="Xiong Z."/>
            <person name="Peng J."/>
            <person name="Sun L."/>
            <person name="Dong J."/>
            <person name="Xue Y."/>
            <person name="Xu X."/>
            <person name="Chen S."/>
            <person name="Yao Z."/>
            <person name="Shen Y."/>
            <person name="Jin Q."/>
        </authorList>
    </citation>
    <scope>NUCLEOTIDE SEQUENCE [LARGE SCALE GENOMIC DNA]</scope>
    <source>
        <strain>8401</strain>
    </source>
</reference>
<name>YFBU_SHIF8</name>
<protein>
    <recommendedName>
        <fullName evidence="1">UPF0304 protein YfbU</fullName>
    </recommendedName>
</protein>
<evidence type="ECO:0000255" key="1">
    <source>
        <dbReference type="HAMAP-Rule" id="MF_00762"/>
    </source>
</evidence>
<gene>
    <name evidence="1" type="primary">yfbU</name>
    <name type="ordered locus">SFV_2361</name>
</gene>
<proteinExistence type="inferred from homology"/>
<organism>
    <name type="scientific">Shigella flexneri serotype 5b (strain 8401)</name>
    <dbReference type="NCBI Taxonomy" id="373384"/>
    <lineage>
        <taxon>Bacteria</taxon>
        <taxon>Pseudomonadati</taxon>
        <taxon>Pseudomonadota</taxon>
        <taxon>Gammaproteobacteria</taxon>
        <taxon>Enterobacterales</taxon>
        <taxon>Enterobacteriaceae</taxon>
        <taxon>Shigella</taxon>
    </lineage>
</organism>
<comment type="similarity">
    <text evidence="1">Belongs to the UPF0304 family.</text>
</comment>
<sequence>MEMTNAQRLILSNQYKMMTMLDPANAERYRRLQTIIERGYGLQMRELDREFGELKEETCRTIIDIMEMYHALHVSWSNLQDQQSIDERRVTFLGFDAATEARYLGYVRFMVNVEGRYTHFDAGTHGFYAQTPMWEKYQRMLNVWHACPRQYHLSANEINQIINA</sequence>
<feature type="chain" id="PRO_1000046766" description="UPF0304 protein YfbU">
    <location>
        <begin position="1"/>
        <end position="164"/>
    </location>
</feature>
<accession>Q0T2J3</accession>